<dbReference type="EC" id="3.2.1.1"/>
<dbReference type="EMBL" id="X59159">
    <property type="protein sequence ID" value="CAA41881.1"/>
    <property type="molecule type" value="Genomic_DNA"/>
</dbReference>
<dbReference type="PIR" id="JH0638">
    <property type="entry name" value="JH0638"/>
</dbReference>
<dbReference type="SMR" id="P29750"/>
<dbReference type="CAZy" id="CBM20">
    <property type="family name" value="Carbohydrate-Binding Module Family 20"/>
</dbReference>
<dbReference type="CAZy" id="GH13">
    <property type="family name" value="Glycoside Hydrolase Family 13"/>
</dbReference>
<dbReference type="GO" id="GO:0004556">
    <property type="term" value="F:alpha-amylase activity"/>
    <property type="evidence" value="ECO:0007669"/>
    <property type="project" value="UniProtKB-EC"/>
</dbReference>
<dbReference type="GO" id="GO:0046872">
    <property type="term" value="F:metal ion binding"/>
    <property type="evidence" value="ECO:0007669"/>
    <property type="project" value="UniProtKB-KW"/>
</dbReference>
<dbReference type="GO" id="GO:2001070">
    <property type="term" value="F:starch binding"/>
    <property type="evidence" value="ECO:0007669"/>
    <property type="project" value="InterPro"/>
</dbReference>
<dbReference type="GO" id="GO:0005975">
    <property type="term" value="P:carbohydrate metabolic process"/>
    <property type="evidence" value="ECO:0007669"/>
    <property type="project" value="InterPro"/>
</dbReference>
<dbReference type="CDD" id="cd11317">
    <property type="entry name" value="AmyAc_bac_euk_AmyA"/>
    <property type="match status" value="1"/>
</dbReference>
<dbReference type="Gene3D" id="3.20.20.80">
    <property type="entry name" value="Glycosidases"/>
    <property type="match status" value="1"/>
</dbReference>
<dbReference type="Gene3D" id="2.60.40.1180">
    <property type="entry name" value="Golgi alpha-mannosidase II"/>
    <property type="match status" value="1"/>
</dbReference>
<dbReference type="Gene3D" id="2.60.40.10">
    <property type="entry name" value="Immunoglobulins"/>
    <property type="match status" value="1"/>
</dbReference>
<dbReference type="InterPro" id="IPR006048">
    <property type="entry name" value="A-amylase/branching_C"/>
</dbReference>
<dbReference type="InterPro" id="IPR031319">
    <property type="entry name" value="A-amylase_C"/>
</dbReference>
<dbReference type="InterPro" id="IPR006046">
    <property type="entry name" value="Alpha_amylase"/>
</dbReference>
<dbReference type="InterPro" id="IPR013784">
    <property type="entry name" value="Carb-bd-like_fold"/>
</dbReference>
<dbReference type="InterPro" id="IPR002044">
    <property type="entry name" value="CBM20"/>
</dbReference>
<dbReference type="InterPro" id="IPR006047">
    <property type="entry name" value="Glyco_hydro_13_cat_dom"/>
</dbReference>
<dbReference type="InterPro" id="IPR013780">
    <property type="entry name" value="Glyco_hydro_b"/>
</dbReference>
<dbReference type="InterPro" id="IPR017853">
    <property type="entry name" value="Glycoside_hydrolase_SF"/>
</dbReference>
<dbReference type="InterPro" id="IPR013783">
    <property type="entry name" value="Ig-like_fold"/>
</dbReference>
<dbReference type="PANTHER" id="PTHR43447">
    <property type="entry name" value="ALPHA-AMYLASE"/>
    <property type="match status" value="1"/>
</dbReference>
<dbReference type="Pfam" id="PF00128">
    <property type="entry name" value="Alpha-amylase"/>
    <property type="match status" value="1"/>
</dbReference>
<dbReference type="Pfam" id="PF02806">
    <property type="entry name" value="Alpha-amylase_C"/>
    <property type="match status" value="1"/>
</dbReference>
<dbReference type="Pfam" id="PF00686">
    <property type="entry name" value="CBM_20"/>
    <property type="match status" value="1"/>
</dbReference>
<dbReference type="PRINTS" id="PR00110">
    <property type="entry name" value="ALPHAAMYLASE"/>
</dbReference>
<dbReference type="SMART" id="SM00642">
    <property type="entry name" value="Aamy"/>
    <property type="match status" value="1"/>
</dbReference>
<dbReference type="SMART" id="SM00632">
    <property type="entry name" value="Aamy_C"/>
    <property type="match status" value="1"/>
</dbReference>
<dbReference type="SMART" id="SM01065">
    <property type="entry name" value="CBM_2"/>
    <property type="match status" value="1"/>
</dbReference>
<dbReference type="SUPFAM" id="SSF51445">
    <property type="entry name" value="(Trans)glycosidases"/>
    <property type="match status" value="1"/>
</dbReference>
<dbReference type="SUPFAM" id="SSF51011">
    <property type="entry name" value="Glycosyl hydrolase domain"/>
    <property type="match status" value="1"/>
</dbReference>
<dbReference type="SUPFAM" id="SSF49452">
    <property type="entry name" value="Starch-binding domain-like"/>
    <property type="match status" value="1"/>
</dbReference>
<dbReference type="PROSITE" id="PS51166">
    <property type="entry name" value="CBM20"/>
    <property type="match status" value="1"/>
</dbReference>
<name>AMY_THECU</name>
<organism>
    <name type="scientific">Thermomonospora curvata</name>
    <dbReference type="NCBI Taxonomy" id="2020"/>
    <lineage>
        <taxon>Bacteria</taxon>
        <taxon>Bacillati</taxon>
        <taxon>Actinomycetota</taxon>
        <taxon>Actinomycetes</taxon>
        <taxon>Streptosporangiales</taxon>
        <taxon>Thermomonosporaceae</taxon>
        <taxon>Thermomonospora</taxon>
    </lineage>
</organism>
<comment type="catalytic activity">
    <reaction>
        <text>Endohydrolysis of (1-&gt;4)-alpha-D-glucosidic linkages in polysaccharides containing three or more (1-&gt;4)-alpha-linked D-glucose units.</text>
        <dbReference type="EC" id="3.2.1.1"/>
    </reaction>
</comment>
<comment type="cofactor">
    <cofactor evidence="1">
        <name>Ca(2+)</name>
        <dbReference type="ChEBI" id="CHEBI:29108"/>
    </cofactor>
    <text evidence="1">Binds 1 Ca(2+) ion per subunit.</text>
</comment>
<comment type="biophysicochemical properties">
    <temperatureDependence>
        <text>Optimum temperature is 65 degrees Celsius.</text>
    </temperatureDependence>
</comment>
<comment type="subunit">
    <text evidence="1">Monomer.</text>
</comment>
<comment type="induction">
    <text>By maltose or maltodextrins, even in the presence of glucose.</text>
</comment>
<comment type="similarity">
    <text evidence="4">Belongs to the glycosyl hydrolase 13 family.</text>
</comment>
<keyword id="KW-0106">Calcium</keyword>
<keyword id="KW-0119">Carbohydrate metabolism</keyword>
<keyword id="KW-0326">Glycosidase</keyword>
<keyword id="KW-0378">Hydrolase</keyword>
<keyword id="KW-0479">Metal-binding</keyword>
<keyword id="KW-0732">Signal</keyword>
<accession>P29750</accession>
<proteinExistence type="evidence at protein level"/>
<feature type="signal peptide" evidence="2">
    <location>
        <begin position="1"/>
        <end position="33"/>
    </location>
</feature>
<feature type="chain" id="PRO_0000001346" description="Alpha-amylase">
    <location>
        <begin position="34"/>
        <end position="605"/>
    </location>
</feature>
<feature type="domain" description="CBM20" evidence="3">
    <location>
        <begin position="500"/>
        <end position="605"/>
    </location>
</feature>
<feature type="active site" description="Nucleophile" evidence="1">
    <location>
        <position position="219"/>
    </location>
</feature>
<feature type="active site" description="Proton donor" evidence="1">
    <location>
        <position position="253"/>
    </location>
</feature>
<feature type="binding site" evidence="1">
    <location>
        <position position="130"/>
    </location>
    <ligand>
        <name>Ca(2+)</name>
        <dbReference type="ChEBI" id="CHEBI:29108"/>
    </ligand>
</feature>
<feature type="binding site" evidence="1">
    <location>
        <position position="189"/>
    </location>
    <ligand>
        <name>Ca(2+)</name>
        <dbReference type="ChEBI" id="CHEBI:29108"/>
    </ligand>
</feature>
<feature type="binding site" evidence="1">
    <location>
        <position position="223"/>
    </location>
    <ligand>
        <name>Ca(2+)</name>
        <dbReference type="ChEBI" id="CHEBI:29108"/>
    </ligand>
</feature>
<feature type="site" description="Transition state stabilizer" evidence="1">
    <location>
        <position position="313"/>
    </location>
</feature>
<gene>
    <name type="primary">tam</name>
</gene>
<protein>
    <recommendedName>
        <fullName>Alpha-amylase</fullName>
        <ecNumber>3.2.1.1</ecNumber>
    </recommendedName>
    <alternativeName>
        <fullName>1,4-alpha-D-glucan glucanohydrolase</fullName>
    </alternativeName>
</protein>
<evidence type="ECO:0000250" key="1"/>
<evidence type="ECO:0000255" key="2"/>
<evidence type="ECO:0000255" key="3">
    <source>
        <dbReference type="PROSITE-ProRule" id="PRU00594"/>
    </source>
</evidence>
<evidence type="ECO:0000305" key="4"/>
<reference key="1">
    <citation type="journal article" date="1992" name="Gene">
        <title>Characterization of the alpha-amylase-encoding gene from Thermomonospora curvata.</title>
        <authorList>
            <person name="Petricek M."/>
            <person name="Tichy P."/>
            <person name="Kuncova M."/>
        </authorList>
    </citation>
    <scope>NUCLEOTIDE SEQUENCE [GENOMIC DNA]</scope>
    <source>
        <strain>CCM 3352</strain>
    </source>
</reference>
<reference key="2">
    <citation type="journal article" date="1991" name="EMBO J.">
        <title>The temporal and spatial distribution pattern of maternal exuperantia protein: evidence for a role in establishment but not maintenance of bicoid mRNA localization.</title>
        <authorList>
            <person name="Marcey D."/>
            <person name="Watkins W.S."/>
            <person name="Hazelrigg T."/>
        </authorList>
    </citation>
    <scope>NUCLEOTIDE SEQUENCE [GENOMIC DNA]</scope>
</reference>
<sequence length="605" mass="64735">MGVRRSLAALLAALLGCATSLVALTVAASPAHAAPSGNRDVIVHLFQWRWKSIADECRTTLGPHGFGAVQVSPPQEHVVLPAEDYPWWQDYQPVSYKLDQTRRGSRADFIDMVNTCREAGVKIYVDAVINHMTGTGSAGAGPGSAGSSYSKYDYPGIYQSQDFNDCRRDITNWNDKWEVQHCELVGLADLKTSSPYVQDRIAAYLNELIDLGVAGFRIDAAKHIPEGDLQAILSRLKNVHPAWGGGKPYIFQEVIADSTISTGSYTHLGSVTEFQYHRDISHAFANGNIAHLTGLGSGLTPSDKAVVFVVNHDTQRYEPILTHTDRARYDLAQKFMLAHPYGTPKVMSSYTWSGDDKAGPPMHSDGTTRPTDCSADRWLCEHRAVAGMVGFHNAVAGQGIGSAVTDGNGRLAFARGSAGYAAFNATNTAWTRTFTTSLPDGVYCDVANGTFVDGVCDGPSYQVSGGKFTATVPANGAVALHVEAPGSCGPDGCGTPPGGGDDCTTVTARFHATVTTWYGQEVAVVGSIPELGSWQPAQGVRLRTDSGTYPVWSGAVDLPAGVGFEYKYVKLNRTAPWSGSRAATASPPWMTSGGGCSQNFYDSWR</sequence>